<sequence>MKILVCENYDKLSEKAAQIIMSQITLKSNSILGLATGSTPIGMYKKLVEMYENKMIDFSDVKTFNLDEYQNLPISNDQSYHYFMDDNLFNYINVKRENIHIPNGMANDIENECIEYDNLIKEAGGIDIQVLGIGNNAHIGFNEPTVSFEKKTYVVELEESTKIANARFFNSLDEVPSKAITMGIGSIFESKKIMLLATGENKAKAIYDTIYGKVTPEVPASILQFHDDVIVILDKKAASLLNPKDYKVV</sequence>
<name>NAGB_CLOBA</name>
<proteinExistence type="inferred from homology"/>
<keyword id="KW-0119">Carbohydrate metabolism</keyword>
<keyword id="KW-0378">Hydrolase</keyword>
<dbReference type="EC" id="3.5.99.6" evidence="1"/>
<dbReference type="EMBL" id="CP001078">
    <property type="protein sequence ID" value="ACD53307.1"/>
    <property type="molecule type" value="Genomic_DNA"/>
</dbReference>
<dbReference type="RefSeq" id="WP_012451240.1">
    <property type="nucleotide sequence ID" value="NC_010723.1"/>
</dbReference>
<dbReference type="SMR" id="B2V163"/>
<dbReference type="KEGG" id="cbt:CLH_0681"/>
<dbReference type="HOGENOM" id="CLU_049611_1_1_9"/>
<dbReference type="UniPathway" id="UPA00629">
    <property type="reaction ID" value="UER00684"/>
</dbReference>
<dbReference type="GO" id="GO:0005737">
    <property type="term" value="C:cytoplasm"/>
    <property type="evidence" value="ECO:0007669"/>
    <property type="project" value="TreeGrafter"/>
</dbReference>
<dbReference type="GO" id="GO:0004342">
    <property type="term" value="F:glucosamine-6-phosphate deaminase activity"/>
    <property type="evidence" value="ECO:0007669"/>
    <property type="project" value="UniProtKB-UniRule"/>
</dbReference>
<dbReference type="GO" id="GO:0042802">
    <property type="term" value="F:identical protein binding"/>
    <property type="evidence" value="ECO:0007669"/>
    <property type="project" value="TreeGrafter"/>
</dbReference>
<dbReference type="GO" id="GO:0005975">
    <property type="term" value="P:carbohydrate metabolic process"/>
    <property type="evidence" value="ECO:0007669"/>
    <property type="project" value="InterPro"/>
</dbReference>
<dbReference type="GO" id="GO:0006043">
    <property type="term" value="P:glucosamine catabolic process"/>
    <property type="evidence" value="ECO:0007669"/>
    <property type="project" value="TreeGrafter"/>
</dbReference>
<dbReference type="GO" id="GO:0006046">
    <property type="term" value="P:N-acetylglucosamine catabolic process"/>
    <property type="evidence" value="ECO:0007669"/>
    <property type="project" value="TreeGrafter"/>
</dbReference>
<dbReference type="GO" id="GO:0019262">
    <property type="term" value="P:N-acetylneuraminate catabolic process"/>
    <property type="evidence" value="ECO:0007669"/>
    <property type="project" value="UniProtKB-UniRule"/>
</dbReference>
<dbReference type="CDD" id="cd01399">
    <property type="entry name" value="GlcN6P_deaminase"/>
    <property type="match status" value="1"/>
</dbReference>
<dbReference type="FunFam" id="3.40.50.1360:FF:000003">
    <property type="entry name" value="Glucosamine-6-phosphate deaminase"/>
    <property type="match status" value="1"/>
</dbReference>
<dbReference type="Gene3D" id="3.40.50.1360">
    <property type="match status" value="1"/>
</dbReference>
<dbReference type="HAMAP" id="MF_01241">
    <property type="entry name" value="GlcN6P_deamin"/>
    <property type="match status" value="1"/>
</dbReference>
<dbReference type="InterPro" id="IPR006148">
    <property type="entry name" value="Glc/Gal-6P_isomerase"/>
</dbReference>
<dbReference type="InterPro" id="IPR004547">
    <property type="entry name" value="Glucosamine6P_isomerase"/>
</dbReference>
<dbReference type="InterPro" id="IPR037171">
    <property type="entry name" value="NagB/RpiA_transferase-like"/>
</dbReference>
<dbReference type="NCBIfam" id="TIGR00502">
    <property type="entry name" value="nagB"/>
    <property type="match status" value="1"/>
</dbReference>
<dbReference type="NCBIfam" id="NF001684">
    <property type="entry name" value="PRK00443.1-4"/>
    <property type="match status" value="1"/>
</dbReference>
<dbReference type="PANTHER" id="PTHR11280">
    <property type="entry name" value="GLUCOSAMINE-6-PHOSPHATE ISOMERASE"/>
    <property type="match status" value="1"/>
</dbReference>
<dbReference type="PANTHER" id="PTHR11280:SF5">
    <property type="entry name" value="GLUCOSAMINE-6-PHOSPHATE ISOMERASE"/>
    <property type="match status" value="1"/>
</dbReference>
<dbReference type="Pfam" id="PF01182">
    <property type="entry name" value="Glucosamine_iso"/>
    <property type="match status" value="1"/>
</dbReference>
<dbReference type="SUPFAM" id="SSF100950">
    <property type="entry name" value="NagB/RpiA/CoA transferase-like"/>
    <property type="match status" value="1"/>
</dbReference>
<comment type="function">
    <text evidence="1">Catalyzes the reversible isomerization-deamination of glucosamine 6-phosphate (GlcN6P) to form fructose 6-phosphate (Fru6P) and ammonium ion.</text>
</comment>
<comment type="catalytic activity">
    <reaction evidence="1">
        <text>alpha-D-glucosamine 6-phosphate + H2O = beta-D-fructose 6-phosphate + NH4(+)</text>
        <dbReference type="Rhea" id="RHEA:12172"/>
        <dbReference type="ChEBI" id="CHEBI:15377"/>
        <dbReference type="ChEBI" id="CHEBI:28938"/>
        <dbReference type="ChEBI" id="CHEBI:57634"/>
        <dbReference type="ChEBI" id="CHEBI:75989"/>
        <dbReference type="EC" id="3.5.99.6"/>
    </reaction>
</comment>
<comment type="pathway">
    <text evidence="1">Amino-sugar metabolism; N-acetylneuraminate degradation; D-fructose 6-phosphate from N-acetylneuraminate: step 5/5.</text>
</comment>
<comment type="similarity">
    <text evidence="1">Belongs to the glucosamine/galactosamine-6-phosphate isomerase family. NagB subfamily.</text>
</comment>
<gene>
    <name evidence="1" type="primary">nagB</name>
    <name type="ordered locus">CLH_0681</name>
</gene>
<protein>
    <recommendedName>
        <fullName evidence="1">Glucosamine-6-phosphate deaminase</fullName>
        <ecNumber evidence="1">3.5.99.6</ecNumber>
    </recommendedName>
    <alternativeName>
        <fullName evidence="1">GlcN6P deaminase</fullName>
        <shortName evidence="1">GNPDA</shortName>
    </alternativeName>
    <alternativeName>
        <fullName evidence="1">Glucosamine-6-phosphate isomerase</fullName>
    </alternativeName>
</protein>
<feature type="chain" id="PRO_1000139763" description="Glucosamine-6-phosphate deaminase">
    <location>
        <begin position="1"/>
        <end position="249"/>
    </location>
</feature>
<feature type="active site" description="Proton acceptor; for enolization step" evidence="1">
    <location>
        <position position="67"/>
    </location>
</feature>
<feature type="active site" description="For ring-opening step" evidence="1">
    <location>
        <position position="136"/>
    </location>
</feature>
<feature type="active site" description="Proton acceptor; for ring-opening step" evidence="1">
    <location>
        <position position="138"/>
    </location>
</feature>
<feature type="active site" description="For ring-opening step" evidence="1">
    <location>
        <position position="143"/>
    </location>
</feature>
<organism>
    <name type="scientific">Clostridium botulinum (strain Alaska E43 / Type E3)</name>
    <dbReference type="NCBI Taxonomy" id="508767"/>
    <lineage>
        <taxon>Bacteria</taxon>
        <taxon>Bacillati</taxon>
        <taxon>Bacillota</taxon>
        <taxon>Clostridia</taxon>
        <taxon>Eubacteriales</taxon>
        <taxon>Clostridiaceae</taxon>
        <taxon>Clostridium</taxon>
    </lineage>
</organism>
<evidence type="ECO:0000255" key="1">
    <source>
        <dbReference type="HAMAP-Rule" id="MF_01241"/>
    </source>
</evidence>
<reference key="1">
    <citation type="submission" date="2008-05" db="EMBL/GenBank/DDBJ databases">
        <title>Complete genome sequence of Clostridium botulinum E3 str. Alaska E43.</title>
        <authorList>
            <person name="Brinkac L.M."/>
            <person name="Brown J.L."/>
            <person name="Bruce D."/>
            <person name="Detter C."/>
            <person name="Munk C."/>
            <person name="Smith L.A."/>
            <person name="Smith T.J."/>
            <person name="Sutton G."/>
            <person name="Brettin T.S."/>
        </authorList>
    </citation>
    <scope>NUCLEOTIDE SEQUENCE [LARGE SCALE GENOMIC DNA]</scope>
    <source>
        <strain>Alaska E43 / Type E3</strain>
    </source>
</reference>
<accession>B2V163</accession>